<keyword id="KW-0002">3D-structure</keyword>
<keyword id="KW-0131">Cell cycle</keyword>
<keyword id="KW-0132">Cell division</keyword>
<keyword id="KW-1003">Cell membrane</keyword>
<keyword id="KW-0963">Cytoplasm</keyword>
<keyword id="KW-0206">Cytoskeleton</keyword>
<keyword id="KW-0903">Direct protein sequencing</keyword>
<keyword id="KW-0342">GTP-binding</keyword>
<keyword id="KW-0449">Lipoprotein</keyword>
<keyword id="KW-0460">Magnesium</keyword>
<keyword id="KW-0472">Membrane</keyword>
<keyword id="KW-0479">Metal-binding</keyword>
<keyword id="KW-0519">Myristate</keyword>
<keyword id="KW-0547">Nucleotide-binding</keyword>
<keyword id="KW-0564">Palmitate</keyword>
<keyword id="KW-1185">Reference proteome</keyword>
<keyword id="KW-0807">Transducer</keyword>
<feature type="initiator methionine" description="Removed" evidence="2">
    <location>
        <position position="1"/>
    </location>
</feature>
<feature type="chain" id="PRO_0000203694" description="Guanine nucleotide-binding protein G(i) subunit alpha-3">
    <location>
        <begin position="2"/>
        <end position="354"/>
    </location>
</feature>
<feature type="domain" description="G-alpha" evidence="4">
    <location>
        <begin position="32"/>
        <end position="354"/>
    </location>
</feature>
<feature type="region of interest" description="G1 motif" evidence="4">
    <location>
        <begin position="35"/>
        <end position="48"/>
    </location>
</feature>
<feature type="region of interest" description="G2 motif" evidence="4">
    <location>
        <begin position="173"/>
        <end position="181"/>
    </location>
</feature>
<feature type="region of interest" description="G3 motif" evidence="4">
    <location>
        <begin position="196"/>
        <end position="205"/>
    </location>
</feature>
<feature type="region of interest" description="G4 motif" evidence="4">
    <location>
        <begin position="265"/>
        <end position="272"/>
    </location>
</feature>
<feature type="region of interest" description="G5 motif" evidence="4">
    <location>
        <begin position="324"/>
        <end position="329"/>
    </location>
</feature>
<feature type="binding site" evidence="2">
    <location>
        <position position="42"/>
    </location>
    <ligand>
        <name>GTP</name>
        <dbReference type="ChEBI" id="CHEBI:37565"/>
    </ligand>
</feature>
<feature type="binding site" evidence="2">
    <location>
        <position position="43"/>
    </location>
    <ligand>
        <name>GTP</name>
        <dbReference type="ChEBI" id="CHEBI:37565"/>
    </ligand>
</feature>
<feature type="binding site" evidence="2">
    <location>
        <position position="44"/>
    </location>
    <ligand>
        <name>GTP</name>
        <dbReference type="ChEBI" id="CHEBI:37565"/>
    </ligand>
</feature>
<feature type="binding site" evidence="2">
    <location>
        <position position="45"/>
    </location>
    <ligand>
        <name>GTP</name>
        <dbReference type="ChEBI" id="CHEBI:37565"/>
    </ligand>
</feature>
<feature type="binding site" evidence="2">
    <location>
        <position position="46"/>
    </location>
    <ligand>
        <name>GTP</name>
        <dbReference type="ChEBI" id="CHEBI:37565"/>
    </ligand>
</feature>
<feature type="binding site" evidence="2">
    <location>
        <position position="47"/>
    </location>
    <ligand>
        <name>GTP</name>
        <dbReference type="ChEBI" id="CHEBI:37565"/>
    </ligand>
</feature>
<feature type="binding site" evidence="2">
    <location>
        <position position="47"/>
    </location>
    <ligand>
        <name>Mg(2+)</name>
        <dbReference type="ChEBI" id="CHEBI:18420"/>
    </ligand>
</feature>
<feature type="binding site" evidence="2">
    <location>
        <position position="48"/>
    </location>
    <ligand>
        <name>GTP</name>
        <dbReference type="ChEBI" id="CHEBI:37565"/>
    </ligand>
</feature>
<feature type="binding site" evidence="2">
    <location>
        <position position="150"/>
    </location>
    <ligand>
        <name>GTP</name>
        <dbReference type="ChEBI" id="CHEBI:37565"/>
    </ligand>
</feature>
<feature type="binding site" evidence="2">
    <location>
        <position position="151"/>
    </location>
    <ligand>
        <name>GTP</name>
        <dbReference type="ChEBI" id="CHEBI:37565"/>
    </ligand>
</feature>
<feature type="binding site" evidence="2">
    <location>
        <position position="175"/>
    </location>
    <ligand>
        <name>GTP</name>
        <dbReference type="ChEBI" id="CHEBI:37565"/>
    </ligand>
</feature>
<feature type="binding site" evidence="2">
    <location>
        <position position="176"/>
    </location>
    <ligand>
        <name>GTP</name>
        <dbReference type="ChEBI" id="CHEBI:37565"/>
    </ligand>
</feature>
<feature type="binding site" evidence="2">
    <location>
        <position position="177"/>
    </location>
    <ligand>
        <name>GTP</name>
        <dbReference type="ChEBI" id="CHEBI:37565"/>
    </ligand>
</feature>
<feature type="binding site" evidence="2">
    <location>
        <position position="178"/>
    </location>
    <ligand>
        <name>GTP</name>
        <dbReference type="ChEBI" id="CHEBI:37565"/>
    </ligand>
</feature>
<feature type="binding site" evidence="2">
    <location>
        <position position="179"/>
    </location>
    <ligand>
        <name>GTP</name>
        <dbReference type="ChEBI" id="CHEBI:37565"/>
    </ligand>
</feature>
<feature type="binding site" evidence="2">
    <location>
        <position position="180"/>
    </location>
    <ligand>
        <name>GTP</name>
        <dbReference type="ChEBI" id="CHEBI:37565"/>
    </ligand>
</feature>
<feature type="binding site" evidence="2">
    <location>
        <position position="181"/>
    </location>
    <ligand>
        <name>GTP</name>
        <dbReference type="ChEBI" id="CHEBI:37565"/>
    </ligand>
</feature>
<feature type="binding site" evidence="2">
    <location>
        <position position="181"/>
    </location>
    <ligand>
        <name>Mg(2+)</name>
        <dbReference type="ChEBI" id="CHEBI:18420"/>
    </ligand>
</feature>
<feature type="binding site" evidence="2">
    <location>
        <position position="201"/>
    </location>
    <ligand>
        <name>GTP</name>
        <dbReference type="ChEBI" id="CHEBI:37565"/>
    </ligand>
</feature>
<feature type="binding site" evidence="2">
    <location>
        <position position="203"/>
    </location>
    <ligand>
        <name>GTP</name>
        <dbReference type="ChEBI" id="CHEBI:37565"/>
    </ligand>
</feature>
<feature type="binding site" evidence="2">
    <location>
        <position position="269"/>
    </location>
    <ligand>
        <name>GTP</name>
        <dbReference type="ChEBI" id="CHEBI:37565"/>
    </ligand>
</feature>
<feature type="binding site" evidence="2">
    <location>
        <position position="270"/>
    </location>
    <ligand>
        <name>GTP</name>
        <dbReference type="ChEBI" id="CHEBI:37565"/>
    </ligand>
</feature>
<feature type="binding site" evidence="2">
    <location>
        <position position="272"/>
    </location>
    <ligand>
        <name>GTP</name>
        <dbReference type="ChEBI" id="CHEBI:37565"/>
    </ligand>
</feature>
<feature type="binding site" evidence="2">
    <location>
        <position position="273"/>
    </location>
    <ligand>
        <name>GTP</name>
        <dbReference type="ChEBI" id="CHEBI:37565"/>
    </ligand>
</feature>
<feature type="binding site" evidence="2">
    <location>
        <position position="325"/>
    </location>
    <ligand>
        <name>GTP</name>
        <dbReference type="ChEBI" id="CHEBI:37565"/>
    </ligand>
</feature>
<feature type="binding site" evidence="2">
    <location>
        <position position="326"/>
    </location>
    <ligand>
        <name>GTP</name>
        <dbReference type="ChEBI" id="CHEBI:37565"/>
    </ligand>
</feature>
<feature type="binding site" evidence="2">
    <location>
        <position position="327"/>
    </location>
    <ligand>
        <name>GTP</name>
        <dbReference type="ChEBI" id="CHEBI:37565"/>
    </ligand>
</feature>
<feature type="lipid moiety-binding region" description="N-myristoyl glycine" evidence="2">
    <location>
        <position position="2"/>
    </location>
</feature>
<feature type="lipid moiety-binding region" description="S-palmitoyl cysteine" evidence="1">
    <location>
        <position position="3"/>
    </location>
</feature>
<feature type="mutagenesis site" description="Fails to bind GTP. Prevents endothelin-mediated activation of GNAQ. Results in increased frequency of developmental defects compared to wild-type when ectopically expressed in Xenopus laevis embryos." evidence="13">
    <original>G</original>
    <variation>R</variation>
    <location>
        <position position="40"/>
    </location>
</feature>
<feature type="mutagenesis site" description="Fails to bind GTP. Prevents endothelin-mediated activation of GNAQ. Results in increased frequency of developmental defects compared to wild-type when ectopically expressed in Xenopus laevis embryos." evidence="13">
    <original>G</original>
    <variation>V</variation>
    <location>
        <position position="45"/>
    </location>
</feature>
<feature type="mutagenesis site" description="Fails to bind GTP. Prevents endothelin-mediated activation of GNAQ. Results in increased frequency of developmental defects compared to wild-type when ectopically expressed in Xenopus laevis embryos." evidence="13">
    <original>S</original>
    <variation>R</variation>
    <location>
        <position position="47"/>
    </location>
</feature>
<feature type="mutagenesis site" description="Fails to bind GTP. Prevents endothelin-mediated activation of GNAQ. Results in increased frequency of developmental defects compared to wild-type when ectopically expressed in Xenopus laevis embryos." evidence="13">
    <original>T</original>
    <variation>N</variation>
    <location>
        <position position="48"/>
    </location>
</feature>
<feature type="mutagenesis site" description="Reduces cell migration by 50% and increases mitosis six-fold." evidence="9">
    <original>G</original>
    <variation>A</variation>
    <location>
        <position position="203"/>
    </location>
</feature>
<feature type="mutagenesis site" description="No effect on promotion of cell migration or GTP-binding activity. Increases sensitivity to activation by CCDC88A." evidence="9 15">
    <original>Q</original>
    <variation>L</variation>
    <location>
        <position position="204"/>
    </location>
</feature>
<feature type="mutagenesis site" description="Dramatically decreases binding to CCDC88A." evidence="8">
    <original>R</original>
    <variation>A</variation>
    <location>
        <position position="208"/>
    </location>
</feature>
<feature type="mutagenesis site" description="Abolishes binding to NUCB1. Dramatically decreases binding to CCDC88A. Does not affect GTP-binding activity but increases the basal exchange rate." evidence="8 11 15">
    <original>W</original>
    <variation>A</variation>
    <location>
        <position position="211"/>
    </location>
</feature>
<feature type="mutagenesis site" description="Abolishes binding to NUCB1. Dramatically decreases binding to CCDC88A. Does not affect GTP-binding activity but increases the basal exchange rate." evidence="8 11 15">
    <original>F</original>
    <variation>A</variation>
    <location>
        <position position="215"/>
    </location>
</feature>
<feature type="mutagenesis site" description="Abolishes binding to NUCB1." evidence="11">
    <original>K</original>
    <variation>E</variation>
    <location>
        <position position="248"/>
    </location>
</feature>
<feature type="mutagenesis site" description="Dramatically decreases interaction with NUCB1." evidence="11">
    <original>K</original>
    <variation>M</variation>
    <location>
        <position position="248"/>
    </location>
</feature>
<feature type="mutagenesis site" description="No effect on interaction with NUCB1." evidence="11">
    <original>W</original>
    <variation>F</variation>
    <location>
        <position position="258"/>
    </location>
</feature>
<feature type="mutagenesis site" description="Fails to bind GTP. Prevents endothelin-mediated activation of GNAQ. Results in increased frequency of developmental defects compared to wild-type when ectopically expressed in Xenopus laevis embryos." evidence="13">
    <original>N</original>
    <variation>Y</variation>
    <location>
        <position position="269"/>
    </location>
</feature>
<feature type="strand" evidence="19">
    <location>
        <begin position="32"/>
        <end position="40"/>
    </location>
</feature>
<feature type="helix" evidence="19">
    <location>
        <begin position="46"/>
        <end position="57"/>
    </location>
</feature>
<feature type="helix" evidence="19">
    <location>
        <begin position="63"/>
        <end position="68"/>
    </location>
</feature>
<feature type="helix" evidence="19">
    <location>
        <begin position="70"/>
        <end position="91"/>
    </location>
</feature>
<feature type="helix" evidence="19">
    <location>
        <begin position="100"/>
        <end position="109"/>
    </location>
</feature>
<feature type="turn" evidence="19">
    <location>
        <begin position="111"/>
        <end position="116"/>
    </location>
</feature>
<feature type="helix" evidence="19">
    <location>
        <begin position="121"/>
        <end position="132"/>
    </location>
</feature>
<feature type="helix" evidence="19">
    <location>
        <begin position="134"/>
        <end position="140"/>
    </location>
</feature>
<feature type="helix" evidence="19">
    <location>
        <begin position="141"/>
        <end position="145"/>
    </location>
</feature>
<feature type="helix" evidence="19">
    <location>
        <begin position="152"/>
        <end position="156"/>
    </location>
</feature>
<feature type="helix" evidence="19">
    <location>
        <begin position="159"/>
        <end position="162"/>
    </location>
</feature>
<feature type="helix" evidence="19">
    <location>
        <begin position="171"/>
        <end position="176"/>
    </location>
</feature>
<feature type="strand" evidence="19">
    <location>
        <begin position="183"/>
        <end position="191"/>
    </location>
</feature>
<feature type="strand" evidence="19">
    <location>
        <begin position="194"/>
        <end position="201"/>
    </location>
</feature>
<feature type="strand" evidence="19">
    <location>
        <begin position="204"/>
        <end position="207"/>
    </location>
</feature>
<feature type="helix" evidence="19">
    <location>
        <begin position="208"/>
        <end position="215"/>
    </location>
</feature>
<feature type="strand" evidence="19">
    <location>
        <begin position="220"/>
        <end position="226"/>
    </location>
</feature>
<feature type="helix" evidence="19">
    <location>
        <begin position="227"/>
        <end position="231"/>
    </location>
</feature>
<feature type="helix" evidence="19">
    <location>
        <begin position="242"/>
        <end position="254"/>
    </location>
</feature>
<feature type="helix" evidence="19">
    <location>
        <begin position="257"/>
        <end position="259"/>
    </location>
</feature>
<feature type="strand" evidence="19">
    <location>
        <begin position="263"/>
        <end position="269"/>
    </location>
</feature>
<feature type="helix" evidence="19">
    <location>
        <begin position="271"/>
        <end position="277"/>
    </location>
</feature>
<feature type="turn" evidence="19">
    <location>
        <begin position="278"/>
        <end position="280"/>
    </location>
</feature>
<feature type="helix" evidence="19">
    <location>
        <begin position="283"/>
        <end position="285"/>
    </location>
</feature>
<feature type="helix" evidence="19">
    <location>
        <begin position="296"/>
        <end position="308"/>
    </location>
</feature>
<feature type="turn" evidence="18">
    <location>
        <begin position="314"/>
        <end position="316"/>
    </location>
</feature>
<feature type="strand" evidence="19">
    <location>
        <begin position="319"/>
        <end position="323"/>
    </location>
</feature>
<feature type="helix" evidence="19">
    <location>
        <begin position="329"/>
        <end position="345"/>
    </location>
</feature>
<accession>P08753</accession>
<dbReference type="EMBL" id="J03219">
    <property type="protein sequence ID" value="AAA41224.1"/>
    <property type="molecule type" value="mRNA"/>
</dbReference>
<dbReference type="EMBL" id="M20713">
    <property type="protein sequence ID" value="AAA40823.1"/>
    <property type="molecule type" value="mRNA"/>
</dbReference>
<dbReference type="PIR" id="E27423">
    <property type="entry name" value="RGRTI3"/>
</dbReference>
<dbReference type="RefSeq" id="NP_037238.1">
    <property type="nucleotide sequence ID" value="NM_013106.2"/>
</dbReference>
<dbReference type="PDB" id="6MHE">
    <property type="method" value="X-ray"/>
    <property type="resolution" value="2.20 A"/>
    <property type="chains" value="A=26-354"/>
</dbReference>
<dbReference type="PDB" id="6MHF">
    <property type="method" value="X-ray"/>
    <property type="resolution" value="2.00 A"/>
    <property type="chains" value="A=26-354"/>
</dbReference>
<dbReference type="PDBsum" id="6MHE"/>
<dbReference type="PDBsum" id="6MHF"/>
<dbReference type="BMRB" id="P08753"/>
<dbReference type="SMR" id="P08753"/>
<dbReference type="BioGRID" id="247672">
    <property type="interactions" value="2"/>
</dbReference>
<dbReference type="CORUM" id="P08753"/>
<dbReference type="DIP" id="DIP-608N"/>
<dbReference type="FunCoup" id="P08753">
    <property type="interactions" value="4584"/>
</dbReference>
<dbReference type="IntAct" id="P08753">
    <property type="interactions" value="3"/>
</dbReference>
<dbReference type="MINT" id="P08753"/>
<dbReference type="STRING" id="10116.ENSRNOP00000026710"/>
<dbReference type="iPTMnet" id="P08753"/>
<dbReference type="PhosphoSitePlus" id="P08753"/>
<dbReference type="SwissPalm" id="P08753"/>
<dbReference type="jPOST" id="P08753"/>
<dbReference type="PaxDb" id="10116-ENSRNOP00000026710"/>
<dbReference type="GeneID" id="25643"/>
<dbReference type="KEGG" id="rno:25643"/>
<dbReference type="UCSC" id="RGD:2714">
    <property type="organism name" value="rat"/>
</dbReference>
<dbReference type="AGR" id="RGD:2714"/>
<dbReference type="CTD" id="2773"/>
<dbReference type="RGD" id="2714">
    <property type="gene designation" value="Gnai3"/>
</dbReference>
<dbReference type="VEuPathDB" id="HostDB:ENSRNOG00000019465"/>
<dbReference type="eggNOG" id="KOG0082">
    <property type="taxonomic scope" value="Eukaryota"/>
</dbReference>
<dbReference type="HOGENOM" id="CLU_014184_6_0_1"/>
<dbReference type="InParanoid" id="P08753"/>
<dbReference type="OrthoDB" id="5817230at2759"/>
<dbReference type="TreeFam" id="TF300673"/>
<dbReference type="Reactome" id="R-RNO-170670">
    <property type="pathway name" value="Adenylate cyclase inhibitory pathway"/>
</dbReference>
<dbReference type="Reactome" id="R-RNO-392170">
    <property type="pathway name" value="ADP signalling through P2Y purinoceptor 12"/>
</dbReference>
<dbReference type="Reactome" id="R-RNO-418594">
    <property type="pathway name" value="G alpha (i) signalling events"/>
</dbReference>
<dbReference type="Reactome" id="R-RNO-9009391">
    <property type="pathway name" value="Extra-nuclear estrogen signaling"/>
</dbReference>
<dbReference type="SABIO-RK" id="P08753"/>
<dbReference type="PRO" id="PR:P08753"/>
<dbReference type="Proteomes" id="UP000002494">
    <property type="component" value="Chromosome 2"/>
</dbReference>
<dbReference type="Bgee" id="ENSRNOG00000019465">
    <property type="expression patterns" value="Expressed in duodenum and 19 other cell types or tissues"/>
</dbReference>
<dbReference type="GO" id="GO:0005813">
    <property type="term" value="C:centrosome"/>
    <property type="evidence" value="ECO:0000250"/>
    <property type="project" value="UniProtKB"/>
</dbReference>
<dbReference type="GO" id="GO:0005737">
    <property type="term" value="C:cytoplasm"/>
    <property type="evidence" value="ECO:0000250"/>
    <property type="project" value="UniProtKB"/>
</dbReference>
<dbReference type="GO" id="GO:0005789">
    <property type="term" value="C:endoplasmic reticulum membrane"/>
    <property type="evidence" value="ECO:0000266"/>
    <property type="project" value="RGD"/>
</dbReference>
<dbReference type="GO" id="GO:0005794">
    <property type="term" value="C:Golgi apparatus"/>
    <property type="evidence" value="ECO:0000266"/>
    <property type="project" value="RGD"/>
</dbReference>
<dbReference type="GO" id="GO:0000139">
    <property type="term" value="C:Golgi membrane"/>
    <property type="evidence" value="ECO:0000266"/>
    <property type="project" value="RGD"/>
</dbReference>
<dbReference type="GO" id="GO:0005834">
    <property type="term" value="C:heterotrimeric G-protein complex"/>
    <property type="evidence" value="ECO:0000318"/>
    <property type="project" value="GO_Central"/>
</dbReference>
<dbReference type="GO" id="GO:0030496">
    <property type="term" value="C:midbody"/>
    <property type="evidence" value="ECO:0000250"/>
    <property type="project" value="UniProtKB"/>
</dbReference>
<dbReference type="GO" id="GO:0005886">
    <property type="term" value="C:plasma membrane"/>
    <property type="evidence" value="ECO:0000314"/>
    <property type="project" value="UniProtKB"/>
</dbReference>
<dbReference type="GO" id="GO:0042588">
    <property type="term" value="C:zymogen granule"/>
    <property type="evidence" value="ECO:0000314"/>
    <property type="project" value="RGD"/>
</dbReference>
<dbReference type="GO" id="GO:0001664">
    <property type="term" value="F:G protein-coupled receptor binding"/>
    <property type="evidence" value="ECO:0000318"/>
    <property type="project" value="GO_Central"/>
</dbReference>
<dbReference type="GO" id="GO:0031821">
    <property type="term" value="F:G protein-coupled serotonin receptor binding"/>
    <property type="evidence" value="ECO:0000353"/>
    <property type="project" value="RGD"/>
</dbReference>
<dbReference type="GO" id="GO:0031683">
    <property type="term" value="F:G-protein beta/gamma-subunit complex binding"/>
    <property type="evidence" value="ECO:0000318"/>
    <property type="project" value="GO_Central"/>
</dbReference>
<dbReference type="GO" id="GO:0019003">
    <property type="term" value="F:GDP binding"/>
    <property type="evidence" value="ECO:0000250"/>
    <property type="project" value="UniProtKB"/>
</dbReference>
<dbReference type="GO" id="GO:0005525">
    <property type="term" value="F:GTP binding"/>
    <property type="evidence" value="ECO:0007669"/>
    <property type="project" value="UniProtKB-KW"/>
</dbReference>
<dbReference type="GO" id="GO:0032794">
    <property type="term" value="F:GTPase activating protein binding"/>
    <property type="evidence" value="ECO:0000353"/>
    <property type="project" value="RGD"/>
</dbReference>
<dbReference type="GO" id="GO:0003924">
    <property type="term" value="F:GTPase activity"/>
    <property type="evidence" value="ECO:0000250"/>
    <property type="project" value="UniProtKB"/>
</dbReference>
<dbReference type="GO" id="GO:0046872">
    <property type="term" value="F:metal ion binding"/>
    <property type="evidence" value="ECO:0007669"/>
    <property type="project" value="UniProtKB-KW"/>
</dbReference>
<dbReference type="GO" id="GO:0019904">
    <property type="term" value="F:protein domain specific binding"/>
    <property type="evidence" value="ECO:0000353"/>
    <property type="project" value="RGD"/>
</dbReference>
<dbReference type="GO" id="GO:0007193">
    <property type="term" value="P:adenylate cyclase-inhibiting G protein-coupled receptor signaling pathway"/>
    <property type="evidence" value="ECO:0000250"/>
    <property type="project" value="UniProtKB"/>
</dbReference>
<dbReference type="GO" id="GO:0007188">
    <property type="term" value="P:adenylate cyclase-modulating G protein-coupled receptor signaling pathway"/>
    <property type="evidence" value="ECO:0000318"/>
    <property type="project" value="GO_Central"/>
</dbReference>
<dbReference type="GO" id="GO:0051301">
    <property type="term" value="P:cell division"/>
    <property type="evidence" value="ECO:0000250"/>
    <property type="project" value="UniProtKB"/>
</dbReference>
<dbReference type="GO" id="GO:0046039">
    <property type="term" value="P:GTP metabolic process"/>
    <property type="evidence" value="ECO:0000250"/>
    <property type="project" value="UniProtKB"/>
</dbReference>
<dbReference type="GO" id="GO:2001234">
    <property type="term" value="P:negative regulation of apoptotic signaling pathway"/>
    <property type="evidence" value="ECO:0000315"/>
    <property type="project" value="RGD"/>
</dbReference>
<dbReference type="GO" id="GO:0051048">
    <property type="term" value="P:negative regulation of secretion"/>
    <property type="evidence" value="ECO:0000304"/>
    <property type="project" value="UniProtKB"/>
</dbReference>
<dbReference type="GO" id="GO:0016239">
    <property type="term" value="P:positive regulation of macroautophagy"/>
    <property type="evidence" value="ECO:0000266"/>
    <property type="project" value="RGD"/>
</dbReference>
<dbReference type="GO" id="GO:0032930">
    <property type="term" value="P:positive regulation of superoxide anion generation"/>
    <property type="evidence" value="ECO:0000315"/>
    <property type="project" value="RGD"/>
</dbReference>
<dbReference type="GO" id="GO:1904707">
    <property type="term" value="P:positive regulation of vascular associated smooth muscle cell proliferation"/>
    <property type="evidence" value="ECO:0000315"/>
    <property type="project" value="RGD"/>
</dbReference>
<dbReference type="GO" id="GO:0006906">
    <property type="term" value="P:vesicle fusion"/>
    <property type="evidence" value="ECO:0000314"/>
    <property type="project" value="RGD"/>
</dbReference>
<dbReference type="CDD" id="cd00066">
    <property type="entry name" value="G-alpha"/>
    <property type="match status" value="1"/>
</dbReference>
<dbReference type="FunFam" id="1.10.400.10:FF:000001">
    <property type="entry name" value="Guanine nucleotide-binding protein G(I) subunit alpha"/>
    <property type="match status" value="1"/>
</dbReference>
<dbReference type="FunFam" id="3.40.50.300:FF:002487">
    <property type="entry name" value="Guanine nucleotide-binding protein G(i) subunit alpha-1"/>
    <property type="match status" value="1"/>
</dbReference>
<dbReference type="FunFam" id="3.40.50.300:FF:003559">
    <property type="entry name" value="Guanine nucleotide-binding protein G(i) subunit alpha-1"/>
    <property type="match status" value="1"/>
</dbReference>
<dbReference type="Gene3D" id="1.10.400.10">
    <property type="entry name" value="GI Alpha 1, domain 2-like"/>
    <property type="match status" value="1"/>
</dbReference>
<dbReference type="Gene3D" id="3.40.50.300">
    <property type="entry name" value="P-loop containing nucleotide triphosphate hydrolases"/>
    <property type="match status" value="1"/>
</dbReference>
<dbReference type="InterPro" id="IPR001408">
    <property type="entry name" value="Gprotein_alpha_I"/>
</dbReference>
<dbReference type="InterPro" id="IPR001019">
    <property type="entry name" value="Gprotein_alpha_su"/>
</dbReference>
<dbReference type="InterPro" id="IPR011025">
    <property type="entry name" value="GproteinA_insert"/>
</dbReference>
<dbReference type="InterPro" id="IPR027417">
    <property type="entry name" value="P-loop_NTPase"/>
</dbReference>
<dbReference type="PANTHER" id="PTHR10218">
    <property type="entry name" value="GTP-BINDING PROTEIN ALPHA SUBUNIT"/>
    <property type="match status" value="1"/>
</dbReference>
<dbReference type="PANTHER" id="PTHR10218:SF230">
    <property type="entry name" value="GUANINE NUCLEOTIDE-BINDING PROTEIN G(I) SUBUNIT ALPHA-3"/>
    <property type="match status" value="1"/>
</dbReference>
<dbReference type="Pfam" id="PF00503">
    <property type="entry name" value="G-alpha"/>
    <property type="match status" value="1"/>
</dbReference>
<dbReference type="PRINTS" id="PR00318">
    <property type="entry name" value="GPROTEINA"/>
</dbReference>
<dbReference type="PRINTS" id="PR00441">
    <property type="entry name" value="GPROTEINAI"/>
</dbReference>
<dbReference type="SMART" id="SM00275">
    <property type="entry name" value="G_alpha"/>
    <property type="match status" value="1"/>
</dbReference>
<dbReference type="SUPFAM" id="SSF52540">
    <property type="entry name" value="P-loop containing nucleoside triphosphate hydrolases"/>
    <property type="match status" value="1"/>
</dbReference>
<dbReference type="SUPFAM" id="SSF47895">
    <property type="entry name" value="Transducin (alpha subunit), insertion domain"/>
    <property type="match status" value="1"/>
</dbReference>
<dbReference type="PROSITE" id="PS51882">
    <property type="entry name" value="G_ALPHA"/>
    <property type="match status" value="1"/>
</dbReference>
<organism>
    <name type="scientific">Rattus norvegicus</name>
    <name type="common">Rat</name>
    <dbReference type="NCBI Taxonomy" id="10116"/>
    <lineage>
        <taxon>Eukaryota</taxon>
        <taxon>Metazoa</taxon>
        <taxon>Chordata</taxon>
        <taxon>Craniata</taxon>
        <taxon>Vertebrata</taxon>
        <taxon>Euteleostomi</taxon>
        <taxon>Mammalia</taxon>
        <taxon>Eutheria</taxon>
        <taxon>Euarchontoglires</taxon>
        <taxon>Glires</taxon>
        <taxon>Rodentia</taxon>
        <taxon>Myomorpha</taxon>
        <taxon>Muroidea</taxon>
        <taxon>Muridae</taxon>
        <taxon>Murinae</taxon>
        <taxon>Rattus</taxon>
    </lineage>
</organism>
<protein>
    <recommendedName>
        <fullName>Guanine nucleotide-binding protein G(i) subunit alpha-3</fullName>
    </recommendedName>
    <alternativeName>
        <fullName>G(i) alpha-3</fullName>
    </alternativeName>
</protein>
<evidence type="ECO:0000250" key="1"/>
<evidence type="ECO:0000250" key="2">
    <source>
        <dbReference type="UniProtKB" id="P08754"/>
    </source>
</evidence>
<evidence type="ECO:0000250" key="3">
    <source>
        <dbReference type="UniProtKB" id="Q9DC51"/>
    </source>
</evidence>
<evidence type="ECO:0000255" key="4">
    <source>
        <dbReference type="PROSITE-ProRule" id="PRU01230"/>
    </source>
</evidence>
<evidence type="ECO:0000269" key="5">
    <source>
    </source>
</evidence>
<evidence type="ECO:0000269" key="6">
    <source>
    </source>
</evidence>
<evidence type="ECO:0000269" key="7">
    <source>
    </source>
</evidence>
<evidence type="ECO:0000269" key="8">
    <source>
    </source>
</evidence>
<evidence type="ECO:0000269" key="9">
    <source>
    </source>
</evidence>
<evidence type="ECO:0000269" key="10">
    <source>
    </source>
</evidence>
<evidence type="ECO:0000269" key="11">
    <source>
    </source>
</evidence>
<evidence type="ECO:0000269" key="12">
    <source>
    </source>
</evidence>
<evidence type="ECO:0000269" key="13">
    <source>
    </source>
</evidence>
<evidence type="ECO:0000269" key="14">
    <source>
    </source>
</evidence>
<evidence type="ECO:0000269" key="15">
    <source>
    </source>
</evidence>
<evidence type="ECO:0000305" key="16"/>
<evidence type="ECO:0007744" key="17">
    <source>
        <dbReference type="PDB" id="6MHF"/>
    </source>
</evidence>
<evidence type="ECO:0007829" key="18">
    <source>
        <dbReference type="PDB" id="6MHE"/>
    </source>
</evidence>
<evidence type="ECO:0007829" key="19">
    <source>
        <dbReference type="PDB" id="6MHF"/>
    </source>
</evidence>
<sequence>MGCTLSAEDKAAVERSKMIDRNLREDGEKAAKEVKLLLLGAGESGKSTIVKQMKIIHEDGYSEDECKQYKVVVYSNTIQSIIAIIRAMGRLKIDFGEAARADDARQLFVLAGSAEEGVMTSELAGVIKRLWRDGGVQACFSRSREYQLNDSASYYLNDLDRISQTNYIPTQQDVLRTRVKTTGIVETHFTFKELYFKMFDVGGQRSERKKWIHCFEGVTAIIFCVALSDYDLVLAEDEEMNRMHESMKLFDSICNNKWFTDTSIILFLNKKDLFEEKIKRSPLTICYPEYTGSNTYEEAAAYIQCQFEDLNRRKDTKEVYTHFTCATDTKNVQFVFDAVTDVIIKNNLKECGLY</sequence>
<reference key="1">
    <citation type="journal article" date="1988" name="J. Biol. Chem.">
        <title>Presence of three distinct molecular species of Gi protein alpha subunit. Structure of rat cDNAs and human genomic DNAs.</title>
        <authorList>
            <person name="Itoh H."/>
            <person name="Toyama R."/>
            <person name="Kozasa T."/>
            <person name="Tsukamoto T."/>
            <person name="Matsuoka M."/>
            <person name="Kaziro Y."/>
        </authorList>
    </citation>
    <scope>NUCLEOTIDE SEQUENCE [MRNA]</scope>
</reference>
<reference key="2">
    <citation type="journal article" date="1987" name="J. Biol. Chem.">
        <title>Molecular cloning of five GTP-binding protein cDNA species from rat olfactory neuroepithelium.</title>
        <authorList>
            <person name="Jones D.T."/>
            <person name="Reed R.R."/>
        </authorList>
    </citation>
    <scope>NUCLEOTIDE SEQUENCE [MRNA]</scope>
    <scope>TISSUE SPECIFICITY</scope>
</reference>
<reference key="3">
    <citation type="journal article" date="1990" name="J. Biol. Chem.">
        <title>Purification and characterization of Go alpha and three types of Gi alpha after expression in Escherichia coli.</title>
        <authorList>
            <person name="Linder M.E."/>
            <person name="Ewald D.A."/>
            <person name="Miller R.J."/>
            <person name="Gilman A.G."/>
        </authorList>
    </citation>
    <scope>PROTEIN SEQUENCE OF 111-125</scope>
    <scope>FUNCTION</scope>
    <scope>SUBUNIT</scope>
</reference>
<reference key="4">
    <citation type="journal article" date="2000" name="Proc. Natl. Acad. Sci. U.S.A.">
        <title>Activator of G protein signaling 3 is a guanine dissociation inhibitor for Galpha i subunits.</title>
        <authorList>
            <person name="de Vries L."/>
            <person name="Fischer T."/>
            <person name="Tronchere H."/>
            <person name="Brothers G.M."/>
            <person name="Strockbine B."/>
            <person name="Siderovski D.P."/>
            <person name="Farquhar M.G."/>
        </authorList>
    </citation>
    <scope>INTERACTION WITH GPSM1</scope>
</reference>
<reference key="5">
    <citation type="journal article" date="2001" name="J. Biol. Chem.">
        <title>RGS12 and RGS14 GoLoco motifs are G alpha(i) interaction sites with guanine nucleotide dissociation inhibitor activity.</title>
        <authorList>
            <person name="Kimple R.J."/>
            <person name="De Vries L."/>
            <person name="Tronchere H."/>
            <person name="Behe C.I."/>
            <person name="Morris R.A."/>
            <person name="Gist Farquhar M."/>
            <person name="Siderovski D.P."/>
        </authorList>
    </citation>
    <scope>INTERACTION WITH RGS12 AND RGS14</scope>
</reference>
<reference key="6">
    <citation type="journal article" date="2007" name="Cell. Signal.">
        <title>Selective interactions between Gi alpha1 and Gi alpha3 and the GoLoco/GPR domain of RGS14 influence its dynamic subcellular localization.</title>
        <authorList>
            <person name="Shu F.J."/>
            <person name="Ramineni S."/>
            <person name="Amyot W."/>
            <person name="Hepler J.R."/>
        </authorList>
    </citation>
    <scope>INTERACTION WITH RGS14</scope>
</reference>
<reference key="7">
    <citation type="journal article" date="2009" name="Proc. Natl. Acad. Sci. U.S.A.">
        <title>GIV is a nonreceptor GEF for G alpha i with a unique motif that regulates Akt signaling.</title>
        <authorList>
            <person name="Garcia-Marcos M."/>
            <person name="Ghosh P."/>
            <person name="Farquhar M.G."/>
        </authorList>
    </citation>
    <scope>INTERACTION WITH CCDC88A</scope>
    <scope>MUTAGENESIS OF ARG-208; TRP-211 AND PHE-215</scope>
</reference>
<reference key="8">
    <citation type="journal article" date="2010" name="Mol. Biol. Cell">
        <title>A G{alpha}i-GIV molecular complex binds epidermal growth factor receptor and determines whether cells migrate or proliferate.</title>
        <authorList>
            <person name="Ghosh P."/>
            <person name="Beas A.O."/>
            <person name="Bornheimer S.J."/>
            <person name="Garcia-Marcos M."/>
            <person name="Forry E.P."/>
            <person name="Johannson C."/>
            <person name="Ear J."/>
            <person name="Jung B.H."/>
            <person name="Cabrera B."/>
            <person name="Carethers J.M."/>
            <person name="Farquhar M.G."/>
        </authorList>
    </citation>
    <scope>IDENTIFICATION IN COMPLEX WITH CCDC88A AND EGFR</scope>
    <scope>MUTAGENESIS OF GLY-203 AND GLN-204</scope>
</reference>
<reference key="9">
    <citation type="journal article" date="2011" name="J. Biol. Chem.">
        <title>G Protein binding sites on Calnuc (nucleobindin 1) and NUCB2 (nucleobindin 2) define a new class of G(alpha)i-regulatory motifs.</title>
        <authorList>
            <person name="Garcia-Marcos M."/>
            <person name="Kietrsunthorn P.S."/>
            <person name="Wang H."/>
            <person name="Ghosh P."/>
            <person name="Farquhar M.G."/>
        </authorList>
    </citation>
    <scope>INTERACTION WITH NUCB1 AND NUCB2</scope>
    <scope>MUTAGENESIS OF TRP-211; PHE-215; LYS-248 AND TRP-258</scope>
</reference>
<reference key="10">
    <citation type="journal article" date="2014" name="Mol. Biol. Cell">
        <title>Structural basis for activation of trimeric Gi proteins by multiple growth factor receptors via GIV/Girdin.</title>
        <authorList>
            <person name="Lin C."/>
            <person name="Ear J."/>
            <person name="Midde K."/>
            <person name="Lopez-Sanchez I."/>
            <person name="Aznar N."/>
            <person name="Garcia-Marcos M."/>
            <person name="Kufareva I."/>
            <person name="Abagyan R."/>
            <person name="Ghosh P."/>
        </authorList>
    </citation>
    <scope>INTERACTION WITH INSR</scope>
</reference>
<reference key="11">
    <citation type="journal article" date="2016" name="Sci. Signal.">
        <title>Dominant-negative Galpha subunits are a mechanism of dysregulated heterotrimeric G protein signaling in human disease.</title>
        <authorList>
            <person name="Marivin A."/>
            <person name="Leyme A."/>
            <person name="Parag-Sharma K."/>
            <person name="DiGiacomo V."/>
            <person name="Cheung A.Y."/>
            <person name="Nguyen L.T."/>
            <person name="Dominguez I."/>
            <person name="Garcia-Marcos M."/>
        </authorList>
    </citation>
    <scope>MUTAGENESIS OF GLY-40; GLY-45; SER-47; THR-48 AND ASN-269</scope>
</reference>
<reference evidence="17" key="12">
    <citation type="journal article" date="2019" name="Proc. Natl. Acad. Sci. U.S.A.">
        <title>Structural basis for GPCR-independent activation of heterotrimeric Gi proteins.</title>
        <authorList>
            <person name="Kalogriopoulos N.A."/>
            <person name="Rees S.D."/>
            <person name="Ngo T."/>
            <person name="Kopcho N.J."/>
            <person name="Ilatovskiy A.V."/>
            <person name="Sun N."/>
            <person name="Komives E.A."/>
            <person name="Chang G."/>
            <person name="Ghosh P."/>
            <person name="Kufareva I."/>
        </authorList>
    </citation>
    <scope>X-RAY CRYSTALLOGRAPHY (2.00 ANGSTROMS) OF 26-354 IN COMPLEX WITH HUMAN CCDC88A AND WITH SYNTHETIC G-ALPHA SUBUNIT-BINDING PEPTIDE</scope>
    <scope>MUTAGENESIS OF GLN-204; TRP-211 AND PHE-215</scope>
</reference>
<reference key="13">
    <citation type="journal article" date="2019" name="Proc. Natl. Acad. Sci. U.S.A.">
        <authorList>
            <person name="Kalogriopoulos N.A."/>
            <person name="Rees S.D."/>
            <person name="Ngo T."/>
            <person name="Kopcho N.J."/>
            <person name="Ilatovskiy A.V."/>
            <person name="Sun N."/>
            <person name="Komives E.A."/>
            <person name="Chang G."/>
            <person name="Ghosh P."/>
            <person name="Kufareva I."/>
        </authorList>
    </citation>
    <scope>ERRATUM OF PUBMED:31363053</scope>
</reference>
<comment type="function">
    <text evidence="2 10">Heterotrimeric guanine nucleotide-binding proteins (G proteins) function as transducers downstream of G protein-coupled receptors (GPCRs) in numerous signaling cascades. The alpha chain contains the guanine nucleotide binding site and alternates between an active, GTP-bound state and an inactive, GDP-bound state. Signaling by an activated GPCR promotes GDP release and GTP binding. The alpha subunit has a low GTPase activity that converts bound GTP to GDP, thereby terminating the signal (PubMed:2159473). Both GDP release and GTP hydrolysis are modulated by numerous regulatory proteins (By similarity). Signaling is mediated via effector proteins, such as adenylate cyclase. Inhibits adenylate cyclase activity, leading to decreased intracellular cAMP levels (By similarity). Stimulates the activity of receptor-regulated K(+) channels (By similarity). The active GTP-bound form prevents the association of RGS14 with centrosomes and is required for the translocation of RGS14 from the cytoplasm to the plasma membrane. May play a role in cell division (By similarity). The active GTP-bound form activates the calcium permeant TRPC5 ion channels (By similarity).</text>
</comment>
<comment type="subunit">
    <text evidence="2 3 5 6 7 8 9 10 11 12">Heterotrimeric G proteins are composed of 3 units; alpha, beta and gamma. The alpha subunit contains the guanine nucleotide binding site (PubMed:2159473). GTP binding causes dissociation of the heterotrimer, liberating the individual subunits so that they can interact with downstream effector proteins. Forms a complex with CCDC88A/GIV and EGFR which leads to enhanced EGFR signaling and triggering of cell migration; ligand stimulation is required for recruitment of GNAI3 to the complex (PubMed:20462955). Interacts (inactive GDP-bound form) with CCDC88A/GIV (via GBA motif); the interaction leads to activation of GNAI3 (PubMed:19211784). Interacts (inactive GDP-bound form) with CCDC88C/DAPLE (via GBA motif); the interaction leads to activation of GNAI3 (By similarity). Interacts (inactive GDP-bound form) with NUCB1 (via GBA motif) and NUCB2 (via GBA motif); the interaction leads to activation of GNAI3 (PubMed:21653697). Interacts (inactive GDP-bound form) with PLCD4 (via GBA motif); the interaction leads to activation of GNAI3 (By similarity). Interacts with INSR; the interaction is probably mediated by CCDC88A/GIV (PubMed:25187647). Interacts with GPSM1 (PubMed:11121039). Interacts (GDP-bound form) with GPSM2 (via GoLoco domains). Does not interact with RGS2. Interacts with RGS8 and RGS10; this strongly enhances the intrinsic GTPase activity (By similarity). Interacts with RGS12 (PubMed:11387333). Interacts with RGS16; this strongly enhances the intrinsic GTPase activity (By similarity). Interacts (via active GTP- or inactive GDP-bound form) with RGS14 (PubMed:11387333, PubMed:16870394). Interacts (via active GTP-bound form) with TRPC5 (via ANK repeats) in a homotetrameric ion channel; the interaction is direct and activates the channel activity (By similarity).</text>
</comment>
<comment type="interaction">
    <interactant intactId="EBI-874897">
        <id>P08753</id>
    </interactant>
    <interactant intactId="EBI-7269229">
        <id>Q5BJU7</id>
        <label>Wasf1</label>
    </interactant>
    <organismsDiffer>false</organismsDiffer>
    <experiments>2</experiments>
</comment>
<comment type="interaction">
    <interactant intactId="EBI-874897">
        <id>P08753</id>
    </interactant>
    <interactant intactId="EBI-874907">
        <id>P49795</id>
        <label>RGS19</label>
    </interactant>
    <organismsDiffer>true</organismsDiffer>
    <experiments>4</experiments>
</comment>
<comment type="subcellular location">
    <subcellularLocation>
        <location evidence="2">Cytoplasm</location>
    </subcellularLocation>
    <subcellularLocation>
        <location evidence="2">Cell membrane</location>
        <topology evidence="16">Lipid-anchor</topology>
    </subcellularLocation>
    <subcellularLocation>
        <location evidence="2">Cytoplasm</location>
        <location evidence="2">Cytoskeleton</location>
        <location evidence="2">Microtubule organizing center</location>
        <location evidence="2">Centrosome</location>
    </subcellularLocation>
    <text evidence="2">Localizes in the centrosomes of interphase and mitotic cells. Detected at the cleavage furrow and/or the midbody.</text>
</comment>
<comment type="tissue specificity">
    <text evidence="14">Ubiquitous.</text>
</comment>
<comment type="similarity">
    <text evidence="16">Belongs to the G-alpha family. G(i/o/t/z) subfamily.</text>
</comment>
<proteinExistence type="evidence at protein level"/>
<name>GNAI3_RAT</name>
<gene>
    <name type="primary">Gnai3</name>
    <name type="synonym">Gnai-3</name>
</gene>